<dbReference type="EC" id="7.1.1.2"/>
<dbReference type="EMBL" id="AF007261">
    <property type="protein sequence ID" value="AAD11860.1"/>
    <property type="molecule type" value="Genomic_DNA"/>
</dbReference>
<dbReference type="PIR" id="S78127">
    <property type="entry name" value="S78127"/>
</dbReference>
<dbReference type="RefSeq" id="NP_044745.1">
    <property type="nucleotide sequence ID" value="NC_001823.1"/>
</dbReference>
<dbReference type="SMR" id="O21233"/>
<dbReference type="GeneID" id="801137"/>
<dbReference type="GO" id="GO:0016020">
    <property type="term" value="C:membrane"/>
    <property type="evidence" value="ECO:0007669"/>
    <property type="project" value="InterPro"/>
</dbReference>
<dbReference type="GO" id="GO:0005739">
    <property type="term" value="C:mitochondrion"/>
    <property type="evidence" value="ECO:0007669"/>
    <property type="project" value="UniProtKB-SubCell"/>
</dbReference>
<dbReference type="GO" id="GO:0051539">
    <property type="term" value="F:4 iron, 4 sulfur cluster binding"/>
    <property type="evidence" value="ECO:0007669"/>
    <property type="project" value="UniProtKB-KW"/>
</dbReference>
<dbReference type="GO" id="GO:0046872">
    <property type="term" value="F:metal ion binding"/>
    <property type="evidence" value="ECO:0007669"/>
    <property type="project" value="UniProtKB-KW"/>
</dbReference>
<dbReference type="GO" id="GO:0008137">
    <property type="term" value="F:NADH dehydrogenase (ubiquinone) activity"/>
    <property type="evidence" value="ECO:0007669"/>
    <property type="project" value="UniProtKB-EC"/>
</dbReference>
<dbReference type="GO" id="GO:0006120">
    <property type="term" value="P:mitochondrial electron transport, NADH to ubiquinone"/>
    <property type="evidence" value="ECO:0007669"/>
    <property type="project" value="TreeGrafter"/>
</dbReference>
<dbReference type="GO" id="GO:0032981">
    <property type="term" value="P:mitochondrial respiratory chain complex I assembly"/>
    <property type="evidence" value="ECO:0007669"/>
    <property type="project" value="TreeGrafter"/>
</dbReference>
<dbReference type="FunFam" id="3.30.70.3270:FF:000001">
    <property type="entry name" value="NADH-quinone oxidoreductase subunit I 1"/>
    <property type="match status" value="1"/>
</dbReference>
<dbReference type="Gene3D" id="3.30.70.3270">
    <property type="match status" value="1"/>
</dbReference>
<dbReference type="HAMAP" id="MF_01351">
    <property type="entry name" value="NDH1_NuoI"/>
    <property type="match status" value="1"/>
</dbReference>
<dbReference type="InterPro" id="IPR017896">
    <property type="entry name" value="4Fe4S_Fe-S-bd"/>
</dbReference>
<dbReference type="InterPro" id="IPR017900">
    <property type="entry name" value="4Fe4S_Fe_S_CS"/>
</dbReference>
<dbReference type="InterPro" id="IPR010226">
    <property type="entry name" value="NADH_quinone_OxRdtase_chainI"/>
</dbReference>
<dbReference type="NCBIfam" id="TIGR01971">
    <property type="entry name" value="NuoI"/>
    <property type="match status" value="1"/>
</dbReference>
<dbReference type="NCBIfam" id="NF004538">
    <property type="entry name" value="PRK05888.1-4"/>
    <property type="match status" value="1"/>
</dbReference>
<dbReference type="NCBIfam" id="NF004539">
    <property type="entry name" value="PRK05888.1-5"/>
    <property type="match status" value="1"/>
</dbReference>
<dbReference type="PANTHER" id="PTHR10849:SF20">
    <property type="entry name" value="NADH DEHYDROGENASE [UBIQUINONE] IRON-SULFUR PROTEIN 8, MITOCHONDRIAL"/>
    <property type="match status" value="1"/>
</dbReference>
<dbReference type="PANTHER" id="PTHR10849">
    <property type="entry name" value="NADH DEHYDROGENASE UBIQUINONE IRON-SULFUR PROTEIN 8, MITOCHONDRIAL"/>
    <property type="match status" value="1"/>
</dbReference>
<dbReference type="Pfam" id="PF12838">
    <property type="entry name" value="Fer4_7"/>
    <property type="match status" value="1"/>
</dbReference>
<dbReference type="SUPFAM" id="SSF54862">
    <property type="entry name" value="4Fe-4S ferredoxins"/>
    <property type="match status" value="1"/>
</dbReference>
<dbReference type="PROSITE" id="PS00198">
    <property type="entry name" value="4FE4S_FER_1"/>
    <property type="match status" value="2"/>
</dbReference>
<dbReference type="PROSITE" id="PS51379">
    <property type="entry name" value="4FE4S_FER_2"/>
    <property type="match status" value="2"/>
</dbReference>
<gene>
    <name type="primary">NAD8</name>
</gene>
<keyword id="KW-0004">4Fe-4S</keyword>
<keyword id="KW-0249">Electron transport</keyword>
<keyword id="KW-0408">Iron</keyword>
<keyword id="KW-0411">Iron-sulfur</keyword>
<keyword id="KW-0479">Metal-binding</keyword>
<keyword id="KW-0496">Mitochondrion</keyword>
<keyword id="KW-0520">NAD</keyword>
<keyword id="KW-0560">Oxidoreductase</keyword>
<keyword id="KW-0677">Repeat</keyword>
<keyword id="KW-0679">Respiratory chain</keyword>
<keyword id="KW-1278">Translocase</keyword>
<keyword id="KW-0813">Transport</keyword>
<keyword id="KW-0830">Ubiquinone</keyword>
<comment type="function">
    <text evidence="1">Core subunit of the mitochondrial membrane respiratory chain NADH dehydrogenase (Complex I) that is believed to belong to the minimal assembly required for catalysis. Complex I functions in the transfer of electrons from NADH to the respiratory chain. The immediate electron acceptor for the enzyme is believed to be ubiquinone (By similarity). May donate electrons to ubiquinone.</text>
</comment>
<comment type="catalytic activity">
    <reaction>
        <text>a ubiquinone + NADH + 5 H(+)(in) = a ubiquinol + NAD(+) + 4 H(+)(out)</text>
        <dbReference type="Rhea" id="RHEA:29091"/>
        <dbReference type="Rhea" id="RHEA-COMP:9565"/>
        <dbReference type="Rhea" id="RHEA-COMP:9566"/>
        <dbReference type="ChEBI" id="CHEBI:15378"/>
        <dbReference type="ChEBI" id="CHEBI:16389"/>
        <dbReference type="ChEBI" id="CHEBI:17976"/>
        <dbReference type="ChEBI" id="CHEBI:57540"/>
        <dbReference type="ChEBI" id="CHEBI:57945"/>
        <dbReference type="EC" id="7.1.1.2"/>
    </reaction>
</comment>
<comment type="cofactor">
    <cofactor evidence="1">
        <name>[4Fe-4S] cluster</name>
        <dbReference type="ChEBI" id="CHEBI:49883"/>
    </cofactor>
    <text evidence="1">Binds 2 [4Fe-4S] clusters per subunit.</text>
</comment>
<comment type="subcellular location">
    <subcellularLocation>
        <location>Mitochondrion</location>
    </subcellularLocation>
</comment>
<comment type="similarity">
    <text evidence="2">Belongs to the complex I 23 kDa subunit family.</text>
</comment>
<protein>
    <recommendedName>
        <fullName>NADH-ubiquinone oxidoreductase subunit 8</fullName>
        <ecNumber>7.1.1.2</ecNumber>
    </recommendedName>
</protein>
<organism>
    <name type="scientific">Reclinomonas americana</name>
    <dbReference type="NCBI Taxonomy" id="48483"/>
    <lineage>
        <taxon>Eukaryota</taxon>
        <taxon>Discoba</taxon>
        <taxon>Jakobida</taxon>
        <taxon>Histionina</taxon>
        <taxon>Histionidae</taxon>
        <taxon>Reclinomonas</taxon>
    </lineage>
</organism>
<proteinExistence type="inferred from homology"/>
<accession>O21233</accession>
<evidence type="ECO:0000250" key="1"/>
<evidence type="ECO:0000305" key="2"/>
<name>NDUS8_RECAM</name>
<feature type="chain" id="PRO_0000118718" description="NADH-ubiquinone oxidoreductase subunit 8">
    <location>
        <begin position="1"/>
        <end position="162"/>
    </location>
</feature>
<feature type="domain" description="4Fe-4S ferredoxin-type 1">
    <location>
        <begin position="54"/>
        <end position="83"/>
    </location>
</feature>
<feature type="domain" description="4Fe-4S ferredoxin-type 2">
    <location>
        <begin position="93"/>
        <end position="122"/>
    </location>
</feature>
<feature type="binding site" evidence="1">
    <location>
        <position position="63"/>
    </location>
    <ligand>
        <name>[4Fe-4S] cluster</name>
        <dbReference type="ChEBI" id="CHEBI:49883"/>
        <label>1</label>
    </ligand>
</feature>
<feature type="binding site" evidence="1">
    <location>
        <position position="66"/>
    </location>
    <ligand>
        <name>[4Fe-4S] cluster</name>
        <dbReference type="ChEBI" id="CHEBI:49883"/>
        <label>1</label>
    </ligand>
</feature>
<feature type="binding site" evidence="1">
    <location>
        <position position="69"/>
    </location>
    <ligand>
        <name>[4Fe-4S] cluster</name>
        <dbReference type="ChEBI" id="CHEBI:49883"/>
        <label>1</label>
    </ligand>
</feature>
<feature type="binding site" evidence="1">
    <location>
        <position position="73"/>
    </location>
    <ligand>
        <name>[4Fe-4S] cluster</name>
        <dbReference type="ChEBI" id="CHEBI:49883"/>
        <label>2</label>
    </ligand>
</feature>
<feature type="binding site" evidence="1">
    <location>
        <position position="102"/>
    </location>
    <ligand>
        <name>[4Fe-4S] cluster</name>
        <dbReference type="ChEBI" id="CHEBI:49883"/>
        <label>2</label>
    </ligand>
</feature>
<feature type="binding site" evidence="1">
    <location>
        <position position="105"/>
    </location>
    <ligand>
        <name>[4Fe-4S] cluster</name>
        <dbReference type="ChEBI" id="CHEBI:49883"/>
        <label>2</label>
    </ligand>
</feature>
<feature type="binding site" evidence="1">
    <location>
        <position position="108"/>
    </location>
    <ligand>
        <name>[4Fe-4S] cluster</name>
        <dbReference type="ChEBI" id="CHEBI:49883"/>
        <label>2</label>
    </ligand>
</feature>
<feature type="binding site" evidence="1">
    <location>
        <position position="112"/>
    </location>
    <ligand>
        <name>[4Fe-4S] cluster</name>
        <dbReference type="ChEBI" id="CHEBI:49883"/>
        <label>1</label>
    </ligand>
</feature>
<geneLocation type="mitochondrion"/>
<sequence>MTIINKTAQTLFLTELVKGMSLTLDYFFRKKVTLNYPFEKGPLSPRFRGEHALRRYQTGEERCIACKLCEAICPAQAITIESEPRIDGSRRTTRYDIDMTKCIYCGFCQEACPVDAIVEGPNFEFATETHEELLYDKEKLLQNGDRWETEIAANLANEALYR</sequence>
<reference key="1">
    <citation type="journal article" date="1997" name="Nature">
        <title>An ancestral mitochondrial DNA resembling a eubacterial genome in miniature.</title>
        <authorList>
            <person name="Lang B.F."/>
            <person name="Burger G."/>
            <person name="O'Kelly C.J."/>
            <person name="Cedergren R."/>
            <person name="Golding G.B."/>
            <person name="Lemieux C."/>
            <person name="Sankoff D."/>
            <person name="Turmel M."/>
            <person name="Gray M.W."/>
        </authorList>
    </citation>
    <scope>NUCLEOTIDE SEQUENCE [GENOMIC DNA]</scope>
    <source>
        <strain>ATCC 50394</strain>
    </source>
</reference>